<protein>
    <recommendedName>
        <fullName evidence="1">Methionine import ATP-binding protein MetN</fullName>
        <ecNumber evidence="1">7.4.2.11</ecNumber>
    </recommendedName>
</protein>
<dbReference type="EC" id="7.4.2.11" evidence="1"/>
<dbReference type="EMBL" id="BX571662">
    <property type="protein sequence ID" value="CAE10949.1"/>
    <property type="molecule type" value="Genomic_DNA"/>
</dbReference>
<dbReference type="RefSeq" id="WP_011139732.1">
    <property type="nucleotide sequence ID" value="NC_005090.1"/>
</dbReference>
<dbReference type="SMR" id="Q7M816"/>
<dbReference type="STRING" id="273121.WS1943"/>
<dbReference type="KEGG" id="wsu:WS1943"/>
<dbReference type="eggNOG" id="COG1135">
    <property type="taxonomic scope" value="Bacteria"/>
</dbReference>
<dbReference type="HOGENOM" id="CLU_000604_1_3_7"/>
<dbReference type="Proteomes" id="UP000000422">
    <property type="component" value="Chromosome"/>
</dbReference>
<dbReference type="GO" id="GO:0005886">
    <property type="term" value="C:plasma membrane"/>
    <property type="evidence" value="ECO:0007669"/>
    <property type="project" value="UniProtKB-SubCell"/>
</dbReference>
<dbReference type="GO" id="GO:0033232">
    <property type="term" value="F:ABC-type D-methionine transporter activity"/>
    <property type="evidence" value="ECO:0007669"/>
    <property type="project" value="UniProtKB-EC"/>
</dbReference>
<dbReference type="GO" id="GO:0005524">
    <property type="term" value="F:ATP binding"/>
    <property type="evidence" value="ECO:0007669"/>
    <property type="project" value="UniProtKB-KW"/>
</dbReference>
<dbReference type="GO" id="GO:0016887">
    <property type="term" value="F:ATP hydrolysis activity"/>
    <property type="evidence" value="ECO:0007669"/>
    <property type="project" value="InterPro"/>
</dbReference>
<dbReference type="Gene3D" id="3.30.70.260">
    <property type="match status" value="1"/>
</dbReference>
<dbReference type="Gene3D" id="3.40.50.300">
    <property type="entry name" value="P-loop containing nucleotide triphosphate hydrolases"/>
    <property type="match status" value="1"/>
</dbReference>
<dbReference type="InterPro" id="IPR003593">
    <property type="entry name" value="AAA+_ATPase"/>
</dbReference>
<dbReference type="InterPro" id="IPR003439">
    <property type="entry name" value="ABC_transporter-like_ATP-bd"/>
</dbReference>
<dbReference type="InterPro" id="IPR017871">
    <property type="entry name" value="ABC_transporter-like_CS"/>
</dbReference>
<dbReference type="InterPro" id="IPR045865">
    <property type="entry name" value="ACT-like_dom_sf"/>
</dbReference>
<dbReference type="InterPro" id="IPR050086">
    <property type="entry name" value="MetN_ABC_transporter-like"/>
</dbReference>
<dbReference type="InterPro" id="IPR018449">
    <property type="entry name" value="NIL_domain"/>
</dbReference>
<dbReference type="InterPro" id="IPR027417">
    <property type="entry name" value="P-loop_NTPase"/>
</dbReference>
<dbReference type="PANTHER" id="PTHR43166">
    <property type="entry name" value="AMINO ACID IMPORT ATP-BINDING PROTEIN"/>
    <property type="match status" value="1"/>
</dbReference>
<dbReference type="PANTHER" id="PTHR43166:SF30">
    <property type="entry name" value="METHIONINE IMPORT ATP-BINDING PROTEIN METN"/>
    <property type="match status" value="1"/>
</dbReference>
<dbReference type="Pfam" id="PF00005">
    <property type="entry name" value="ABC_tran"/>
    <property type="match status" value="1"/>
</dbReference>
<dbReference type="Pfam" id="PF09383">
    <property type="entry name" value="NIL"/>
    <property type="match status" value="1"/>
</dbReference>
<dbReference type="SMART" id="SM00382">
    <property type="entry name" value="AAA"/>
    <property type="match status" value="1"/>
</dbReference>
<dbReference type="SMART" id="SM00930">
    <property type="entry name" value="NIL"/>
    <property type="match status" value="1"/>
</dbReference>
<dbReference type="SUPFAM" id="SSF55021">
    <property type="entry name" value="ACT-like"/>
    <property type="match status" value="1"/>
</dbReference>
<dbReference type="SUPFAM" id="SSF52540">
    <property type="entry name" value="P-loop containing nucleoside triphosphate hydrolases"/>
    <property type="match status" value="1"/>
</dbReference>
<dbReference type="PROSITE" id="PS00211">
    <property type="entry name" value="ABC_TRANSPORTER_1"/>
    <property type="match status" value="1"/>
</dbReference>
<dbReference type="PROSITE" id="PS50893">
    <property type="entry name" value="ABC_TRANSPORTER_2"/>
    <property type="match status" value="1"/>
</dbReference>
<dbReference type="PROSITE" id="PS51264">
    <property type="entry name" value="METN"/>
    <property type="match status" value="1"/>
</dbReference>
<sequence length="303" mass="33851">MLDQISLEIPKGTIYGLVGHSGAGKSTLLRTINGLEGFDEGELWVDGVDLQSLQGDALRVFRKNIGMIFQHFSLMARQNVFENVALPLRCWKYPEAEIQKRVFNLLSLVGLESKSDSYPSALSGGQKQRVAIARALTLEPQILLSDEATSALDPSMTQSILDLLQTINQELGVTVVLVTHEMEVVKKLCHHAAFLEGGKLLRSGNIEELFLQPDPKMRHFLGESEVLPKEGVNIRLYFPKEVAQNPIITQMARQLSLDFSIVWGKLERFGEDVLGSLVINIPEARQEEAERFLESSGVRWEVL</sequence>
<feature type="chain" id="PRO_0000270438" description="Methionine import ATP-binding protein MetN">
    <location>
        <begin position="1"/>
        <end position="303"/>
    </location>
</feature>
<feature type="domain" description="ABC transporter" evidence="1">
    <location>
        <begin position="1"/>
        <end position="222"/>
    </location>
</feature>
<feature type="binding site" evidence="1">
    <location>
        <begin position="19"/>
        <end position="26"/>
    </location>
    <ligand>
        <name>ATP</name>
        <dbReference type="ChEBI" id="CHEBI:30616"/>
    </ligand>
</feature>
<evidence type="ECO:0000255" key="1">
    <source>
        <dbReference type="HAMAP-Rule" id="MF_01719"/>
    </source>
</evidence>
<reference key="1">
    <citation type="journal article" date="2003" name="Proc. Natl. Acad. Sci. U.S.A.">
        <title>Complete genome sequence and analysis of Wolinella succinogenes.</title>
        <authorList>
            <person name="Baar C."/>
            <person name="Eppinger M."/>
            <person name="Raddatz G."/>
            <person name="Simon J."/>
            <person name="Lanz C."/>
            <person name="Klimmek O."/>
            <person name="Nandakumar R."/>
            <person name="Gross R."/>
            <person name="Rosinus A."/>
            <person name="Keller H."/>
            <person name="Jagtap P."/>
            <person name="Linke B."/>
            <person name="Meyer F."/>
            <person name="Lederer H."/>
            <person name="Schuster S.C."/>
        </authorList>
    </citation>
    <scope>NUCLEOTIDE SEQUENCE [LARGE SCALE GENOMIC DNA]</scope>
    <source>
        <strain>ATCC 29543 / DSM 1740 / CCUG 13145 / JCM 31913 / LMG 7466 / NCTC 11488 / FDC 602W</strain>
    </source>
</reference>
<gene>
    <name evidence="1" type="primary">metN</name>
    <name type="ordered locus">WS1943</name>
</gene>
<comment type="function">
    <text evidence="1">Part of the ABC transporter complex MetNIQ involved in methionine import. Responsible for energy coupling to the transport system.</text>
</comment>
<comment type="catalytic activity">
    <reaction evidence="1">
        <text>L-methionine(out) + ATP + H2O = L-methionine(in) + ADP + phosphate + H(+)</text>
        <dbReference type="Rhea" id="RHEA:29779"/>
        <dbReference type="ChEBI" id="CHEBI:15377"/>
        <dbReference type="ChEBI" id="CHEBI:15378"/>
        <dbReference type="ChEBI" id="CHEBI:30616"/>
        <dbReference type="ChEBI" id="CHEBI:43474"/>
        <dbReference type="ChEBI" id="CHEBI:57844"/>
        <dbReference type="ChEBI" id="CHEBI:456216"/>
        <dbReference type="EC" id="7.4.2.11"/>
    </reaction>
</comment>
<comment type="catalytic activity">
    <reaction evidence="1">
        <text>D-methionine(out) + ATP + H2O = D-methionine(in) + ADP + phosphate + H(+)</text>
        <dbReference type="Rhea" id="RHEA:29767"/>
        <dbReference type="ChEBI" id="CHEBI:15377"/>
        <dbReference type="ChEBI" id="CHEBI:15378"/>
        <dbReference type="ChEBI" id="CHEBI:30616"/>
        <dbReference type="ChEBI" id="CHEBI:43474"/>
        <dbReference type="ChEBI" id="CHEBI:57932"/>
        <dbReference type="ChEBI" id="CHEBI:456216"/>
        <dbReference type="EC" id="7.4.2.11"/>
    </reaction>
</comment>
<comment type="subunit">
    <text evidence="1">The complex is composed of two ATP-binding proteins (MetN), two transmembrane proteins (MetI) and a solute-binding protein (MetQ).</text>
</comment>
<comment type="subcellular location">
    <subcellularLocation>
        <location evidence="1">Cell inner membrane</location>
        <topology evidence="1">Peripheral membrane protein</topology>
    </subcellularLocation>
</comment>
<comment type="similarity">
    <text evidence="1">Belongs to the ABC transporter superfamily. Methionine importer (TC 3.A.1.24) family.</text>
</comment>
<proteinExistence type="inferred from homology"/>
<organism>
    <name type="scientific">Wolinella succinogenes (strain ATCC 29543 / DSM 1740 / CCUG 13145 / JCM 31913 / LMG 7466 / NCTC 11488 / FDC 602W)</name>
    <name type="common">Vibrio succinogenes</name>
    <dbReference type="NCBI Taxonomy" id="273121"/>
    <lineage>
        <taxon>Bacteria</taxon>
        <taxon>Pseudomonadati</taxon>
        <taxon>Campylobacterota</taxon>
        <taxon>Epsilonproteobacteria</taxon>
        <taxon>Campylobacterales</taxon>
        <taxon>Helicobacteraceae</taxon>
        <taxon>Wolinella</taxon>
    </lineage>
</organism>
<keyword id="KW-0029">Amino-acid transport</keyword>
<keyword id="KW-0067">ATP-binding</keyword>
<keyword id="KW-0997">Cell inner membrane</keyword>
<keyword id="KW-1003">Cell membrane</keyword>
<keyword id="KW-0472">Membrane</keyword>
<keyword id="KW-0547">Nucleotide-binding</keyword>
<keyword id="KW-1185">Reference proteome</keyword>
<keyword id="KW-1278">Translocase</keyword>
<keyword id="KW-0813">Transport</keyword>
<name>METN_WOLSU</name>
<accession>Q7M816</accession>